<gene>
    <name evidence="1" type="primary">alaS</name>
    <name type="ordered locus">MRA_2584</name>
</gene>
<name>SYA_MYCTA</name>
<accession>A5U5Q5</accession>
<dbReference type="EC" id="6.1.1.7" evidence="1"/>
<dbReference type="EMBL" id="CP000611">
    <property type="protein sequence ID" value="ABQ74355.1"/>
    <property type="molecule type" value="Genomic_DNA"/>
</dbReference>
<dbReference type="RefSeq" id="WP_003902305.1">
    <property type="nucleotide sequence ID" value="NZ_CP016972.1"/>
</dbReference>
<dbReference type="SMR" id="A5U5Q5"/>
<dbReference type="GeneID" id="45426558"/>
<dbReference type="KEGG" id="mra:MRA_2584"/>
<dbReference type="eggNOG" id="COG0013">
    <property type="taxonomic scope" value="Bacteria"/>
</dbReference>
<dbReference type="HOGENOM" id="CLU_004485_1_1_11"/>
<dbReference type="Proteomes" id="UP000001988">
    <property type="component" value="Chromosome"/>
</dbReference>
<dbReference type="GO" id="GO:0005829">
    <property type="term" value="C:cytosol"/>
    <property type="evidence" value="ECO:0007669"/>
    <property type="project" value="TreeGrafter"/>
</dbReference>
<dbReference type="GO" id="GO:0004813">
    <property type="term" value="F:alanine-tRNA ligase activity"/>
    <property type="evidence" value="ECO:0007669"/>
    <property type="project" value="UniProtKB-UniRule"/>
</dbReference>
<dbReference type="GO" id="GO:0002161">
    <property type="term" value="F:aminoacyl-tRNA deacylase activity"/>
    <property type="evidence" value="ECO:0007669"/>
    <property type="project" value="TreeGrafter"/>
</dbReference>
<dbReference type="GO" id="GO:0005524">
    <property type="term" value="F:ATP binding"/>
    <property type="evidence" value="ECO:0007669"/>
    <property type="project" value="UniProtKB-UniRule"/>
</dbReference>
<dbReference type="GO" id="GO:0000049">
    <property type="term" value="F:tRNA binding"/>
    <property type="evidence" value="ECO:0007669"/>
    <property type="project" value="UniProtKB-KW"/>
</dbReference>
<dbReference type="GO" id="GO:0008270">
    <property type="term" value="F:zinc ion binding"/>
    <property type="evidence" value="ECO:0007669"/>
    <property type="project" value="UniProtKB-UniRule"/>
</dbReference>
<dbReference type="GO" id="GO:0006419">
    <property type="term" value="P:alanyl-tRNA aminoacylation"/>
    <property type="evidence" value="ECO:0007669"/>
    <property type="project" value="UniProtKB-UniRule"/>
</dbReference>
<dbReference type="CDD" id="cd00673">
    <property type="entry name" value="AlaRS_core"/>
    <property type="match status" value="1"/>
</dbReference>
<dbReference type="FunFam" id="2.40.30.130:FF:000011">
    <property type="entry name" value="Alanine--tRNA ligase"/>
    <property type="match status" value="1"/>
</dbReference>
<dbReference type="FunFam" id="3.10.310.40:FF:000001">
    <property type="entry name" value="Alanine--tRNA ligase"/>
    <property type="match status" value="1"/>
</dbReference>
<dbReference type="FunFam" id="3.30.54.20:FF:000001">
    <property type="entry name" value="Alanine--tRNA ligase"/>
    <property type="match status" value="1"/>
</dbReference>
<dbReference type="FunFam" id="3.30.930.10:FF:000004">
    <property type="entry name" value="Alanine--tRNA ligase"/>
    <property type="match status" value="1"/>
</dbReference>
<dbReference type="FunFam" id="3.30.980.10:FF:000004">
    <property type="entry name" value="Alanine--tRNA ligase, cytoplasmic"/>
    <property type="match status" value="1"/>
</dbReference>
<dbReference type="Gene3D" id="2.40.30.130">
    <property type="match status" value="1"/>
</dbReference>
<dbReference type="Gene3D" id="3.10.310.40">
    <property type="match status" value="1"/>
</dbReference>
<dbReference type="Gene3D" id="3.30.54.20">
    <property type="match status" value="1"/>
</dbReference>
<dbReference type="Gene3D" id="6.10.250.550">
    <property type="match status" value="1"/>
</dbReference>
<dbReference type="Gene3D" id="3.30.930.10">
    <property type="entry name" value="Bira Bifunctional Protein, Domain 2"/>
    <property type="match status" value="1"/>
</dbReference>
<dbReference type="Gene3D" id="3.30.980.10">
    <property type="entry name" value="Threonyl-trna Synthetase, Chain A, domain 2"/>
    <property type="match status" value="1"/>
</dbReference>
<dbReference type="HAMAP" id="MF_00036_B">
    <property type="entry name" value="Ala_tRNA_synth_B"/>
    <property type="match status" value="1"/>
</dbReference>
<dbReference type="InterPro" id="IPR045864">
    <property type="entry name" value="aa-tRNA-synth_II/BPL/LPL"/>
</dbReference>
<dbReference type="InterPro" id="IPR002318">
    <property type="entry name" value="Ala-tRNA-lgiase_IIc"/>
</dbReference>
<dbReference type="InterPro" id="IPR018162">
    <property type="entry name" value="Ala-tRNA-ligase_IIc_anticod-bd"/>
</dbReference>
<dbReference type="InterPro" id="IPR018165">
    <property type="entry name" value="Ala-tRNA-synth_IIc_core"/>
</dbReference>
<dbReference type="InterPro" id="IPR018164">
    <property type="entry name" value="Ala-tRNA-synth_IIc_N"/>
</dbReference>
<dbReference type="InterPro" id="IPR050058">
    <property type="entry name" value="Ala-tRNA_ligase"/>
</dbReference>
<dbReference type="InterPro" id="IPR023033">
    <property type="entry name" value="Ala_tRNA_ligase_euk/bac"/>
</dbReference>
<dbReference type="InterPro" id="IPR003156">
    <property type="entry name" value="DHHA1_dom"/>
</dbReference>
<dbReference type="InterPro" id="IPR018163">
    <property type="entry name" value="Thr/Ala-tRNA-synth_IIc_edit"/>
</dbReference>
<dbReference type="InterPro" id="IPR009000">
    <property type="entry name" value="Transl_B-barrel_sf"/>
</dbReference>
<dbReference type="InterPro" id="IPR012947">
    <property type="entry name" value="tRNA_SAD"/>
</dbReference>
<dbReference type="NCBIfam" id="TIGR00344">
    <property type="entry name" value="alaS"/>
    <property type="match status" value="1"/>
</dbReference>
<dbReference type="PANTHER" id="PTHR11777:SF9">
    <property type="entry name" value="ALANINE--TRNA LIGASE, CYTOPLASMIC"/>
    <property type="match status" value="1"/>
</dbReference>
<dbReference type="PANTHER" id="PTHR11777">
    <property type="entry name" value="ALANYL-TRNA SYNTHETASE"/>
    <property type="match status" value="1"/>
</dbReference>
<dbReference type="Pfam" id="PF02272">
    <property type="entry name" value="DHHA1"/>
    <property type="match status" value="1"/>
</dbReference>
<dbReference type="Pfam" id="PF01411">
    <property type="entry name" value="tRNA-synt_2c"/>
    <property type="match status" value="1"/>
</dbReference>
<dbReference type="Pfam" id="PF07973">
    <property type="entry name" value="tRNA_SAD"/>
    <property type="match status" value="1"/>
</dbReference>
<dbReference type="PRINTS" id="PR00980">
    <property type="entry name" value="TRNASYNTHALA"/>
</dbReference>
<dbReference type="SMART" id="SM00863">
    <property type="entry name" value="tRNA_SAD"/>
    <property type="match status" value="1"/>
</dbReference>
<dbReference type="SUPFAM" id="SSF55681">
    <property type="entry name" value="Class II aaRS and biotin synthetases"/>
    <property type="match status" value="1"/>
</dbReference>
<dbReference type="SUPFAM" id="SSF101353">
    <property type="entry name" value="Putative anticodon-binding domain of alanyl-tRNA synthetase (AlaRS)"/>
    <property type="match status" value="1"/>
</dbReference>
<dbReference type="SUPFAM" id="SSF55186">
    <property type="entry name" value="ThrRS/AlaRS common domain"/>
    <property type="match status" value="1"/>
</dbReference>
<dbReference type="SUPFAM" id="SSF50447">
    <property type="entry name" value="Translation proteins"/>
    <property type="match status" value="1"/>
</dbReference>
<dbReference type="PROSITE" id="PS50860">
    <property type="entry name" value="AA_TRNA_LIGASE_II_ALA"/>
    <property type="match status" value="1"/>
</dbReference>
<feature type="chain" id="PRO_0000347687" description="Alanine--tRNA ligase">
    <location>
        <begin position="1"/>
        <end position="904"/>
    </location>
</feature>
<feature type="binding site" evidence="1">
    <location>
        <position position="584"/>
    </location>
    <ligand>
        <name>Zn(2+)</name>
        <dbReference type="ChEBI" id="CHEBI:29105"/>
    </ligand>
</feature>
<feature type="binding site" evidence="1">
    <location>
        <position position="588"/>
    </location>
    <ligand>
        <name>Zn(2+)</name>
        <dbReference type="ChEBI" id="CHEBI:29105"/>
    </ligand>
</feature>
<feature type="binding site" evidence="1">
    <location>
        <position position="687"/>
    </location>
    <ligand>
        <name>Zn(2+)</name>
        <dbReference type="ChEBI" id="CHEBI:29105"/>
    </ligand>
</feature>
<feature type="binding site" evidence="1">
    <location>
        <position position="691"/>
    </location>
    <ligand>
        <name>Zn(2+)</name>
        <dbReference type="ChEBI" id="CHEBI:29105"/>
    </ligand>
</feature>
<reference key="1">
    <citation type="journal article" date="2008" name="PLoS ONE">
        <title>Genetic basis of virulence attenuation revealed by comparative genomic analysis of Mycobacterium tuberculosis strain H37Ra versus H37Rv.</title>
        <authorList>
            <person name="Zheng H."/>
            <person name="Lu L."/>
            <person name="Wang B."/>
            <person name="Pu S."/>
            <person name="Zhang X."/>
            <person name="Zhu G."/>
            <person name="Shi W."/>
            <person name="Zhang L."/>
            <person name="Wang H."/>
            <person name="Wang S."/>
            <person name="Zhao G."/>
            <person name="Zhang Y."/>
        </authorList>
    </citation>
    <scope>NUCLEOTIDE SEQUENCE [LARGE SCALE GENOMIC DNA]</scope>
    <source>
        <strain>ATCC 25177 / H37Ra</strain>
    </source>
</reference>
<evidence type="ECO:0000255" key="1">
    <source>
        <dbReference type="HAMAP-Rule" id="MF_00036"/>
    </source>
</evidence>
<sequence length="904" mass="97357">MQTHEIRKRFLDHFVKAGHTEVPSASVILDDPNLLFVNAGMVQFVPFFLGQRTPPYPTATSIQKCIRTPDIDEVGITTRHNTFFQMAGNFSFGDYFKRGAIELAWALLTNSLAAGGYGLDPERIWTTVYFDDDEAVRLWQEVAGLPAERIQRRGMADNYWSMGIPGPCGPSSEIYYDRGPEFGPAGGPIVSEDRYLEVWNLVFMQNERGEGTTKEDYQILGPLPRKNIDTGMGVERIALVLQDVHNVYETDLLRPVIDTVARVAARAYDVGNHEDDVRYRIIADHSRTAAILIGDGVSPGNDGRGYVLRRLLRRVIRSAKLLGIDAAIVGDLMATVRNAMGPSYPELVADFERISRIAVAEETAFNRTLASGSRLFEEVASSTKKSGATVLSGSDAFTLHDTYGFPIELTLEMAAETGLQVDEIGFRELMAEQRRRAKADAAARKHAHADLSAYRELVDAGATEFTGFDELRSQARILGIFVDGKRVPVVAHGVAGGAGEGQRVELVLDRTPLYAESGGQIADEGTISGTGSSEAARAAVTDVQKIAKTLWVHRVNVESGEFVEGDTVIAAVDPGWRRGATQGHSGTHMVHAALRQVLGPNAVQAGSLNRPGYLRFDFNWQGPLTDDQRTQVEEVTNEAVQADFEVRTFTEQLDKAKAMGAIALFGESYPDEVRVVEMGGPFSLELCGGTHVSNTAQIGPVTILGESSIGSGVRRVEAYVGLDSFRHLAKERALMAGLASSLKVPSEEVPARVANLVERLRAAEKELERVRMASARAAATNAAAGAQRIGNVRLVAQRMSGGMTAADLRSLIGDIRGKLGSEPAVVALIAEGESQTVPYAVAANPAAQDLGIRANDLVKQLAVAVEGRGGGKADLAQGSGKNPTGIDAALDAVRSEIAVIARVG</sequence>
<proteinExistence type="inferred from homology"/>
<protein>
    <recommendedName>
        <fullName evidence="1">Alanine--tRNA ligase</fullName>
        <ecNumber evidence="1">6.1.1.7</ecNumber>
    </recommendedName>
    <alternativeName>
        <fullName evidence="1">Alanyl-tRNA synthetase</fullName>
        <shortName evidence="1">AlaRS</shortName>
    </alternativeName>
</protein>
<comment type="function">
    <text evidence="1">Catalyzes the attachment of alanine to tRNA(Ala) in a two-step reaction: alanine is first activated by ATP to form Ala-AMP and then transferred to the acceptor end of tRNA(Ala). Also edits incorrectly charged Ser-tRNA(Ala) and Gly-tRNA(Ala) via its editing domain.</text>
</comment>
<comment type="catalytic activity">
    <reaction evidence="1">
        <text>tRNA(Ala) + L-alanine + ATP = L-alanyl-tRNA(Ala) + AMP + diphosphate</text>
        <dbReference type="Rhea" id="RHEA:12540"/>
        <dbReference type="Rhea" id="RHEA-COMP:9657"/>
        <dbReference type="Rhea" id="RHEA-COMP:9923"/>
        <dbReference type="ChEBI" id="CHEBI:30616"/>
        <dbReference type="ChEBI" id="CHEBI:33019"/>
        <dbReference type="ChEBI" id="CHEBI:57972"/>
        <dbReference type="ChEBI" id="CHEBI:78442"/>
        <dbReference type="ChEBI" id="CHEBI:78497"/>
        <dbReference type="ChEBI" id="CHEBI:456215"/>
        <dbReference type="EC" id="6.1.1.7"/>
    </reaction>
</comment>
<comment type="cofactor">
    <cofactor evidence="1">
        <name>Zn(2+)</name>
        <dbReference type="ChEBI" id="CHEBI:29105"/>
    </cofactor>
    <text evidence="1">Binds 1 zinc ion per subunit.</text>
</comment>
<comment type="subcellular location">
    <subcellularLocation>
        <location evidence="1">Cytoplasm</location>
    </subcellularLocation>
</comment>
<comment type="domain">
    <text evidence="1">Consists of three domains; the N-terminal catalytic domain, the editing domain and the C-terminal C-Ala domain. The editing domain removes incorrectly charged amino acids, while the C-Ala domain, along with tRNA(Ala), serves as a bridge to cooperatively bring together the editing and aminoacylation centers thus stimulating deacylation of misacylated tRNAs.</text>
</comment>
<comment type="similarity">
    <text evidence="1">Belongs to the class-II aminoacyl-tRNA synthetase family.</text>
</comment>
<keyword id="KW-0030">Aminoacyl-tRNA synthetase</keyword>
<keyword id="KW-0067">ATP-binding</keyword>
<keyword id="KW-0963">Cytoplasm</keyword>
<keyword id="KW-0436">Ligase</keyword>
<keyword id="KW-0479">Metal-binding</keyword>
<keyword id="KW-0547">Nucleotide-binding</keyword>
<keyword id="KW-0648">Protein biosynthesis</keyword>
<keyword id="KW-1185">Reference proteome</keyword>
<keyword id="KW-0694">RNA-binding</keyword>
<keyword id="KW-0820">tRNA-binding</keyword>
<keyword id="KW-0862">Zinc</keyword>
<organism>
    <name type="scientific">Mycobacterium tuberculosis (strain ATCC 25177 / H37Ra)</name>
    <dbReference type="NCBI Taxonomy" id="419947"/>
    <lineage>
        <taxon>Bacteria</taxon>
        <taxon>Bacillati</taxon>
        <taxon>Actinomycetota</taxon>
        <taxon>Actinomycetes</taxon>
        <taxon>Mycobacteriales</taxon>
        <taxon>Mycobacteriaceae</taxon>
        <taxon>Mycobacterium</taxon>
        <taxon>Mycobacterium tuberculosis complex</taxon>
    </lineage>
</organism>